<organism>
    <name type="scientific">Bubalus bubalis</name>
    <name type="common">Domestic water buffalo</name>
    <dbReference type="NCBI Taxonomy" id="89462"/>
    <lineage>
        <taxon>Eukaryota</taxon>
        <taxon>Metazoa</taxon>
        <taxon>Chordata</taxon>
        <taxon>Craniata</taxon>
        <taxon>Vertebrata</taxon>
        <taxon>Euteleostomi</taxon>
        <taxon>Mammalia</taxon>
        <taxon>Eutheria</taxon>
        <taxon>Laurasiatheria</taxon>
        <taxon>Artiodactyla</taxon>
        <taxon>Ruminantia</taxon>
        <taxon>Pecora</taxon>
        <taxon>Bovidae</taxon>
        <taxon>Bovinae</taxon>
        <taxon>Bubalus</taxon>
    </lineage>
</organism>
<proteinExistence type="evidence at protein level"/>
<reference key="1">
    <citation type="submission" date="1999-10" db="EMBL/GenBank/DDBJ databases">
        <title>Research on the sequences of milk protein genes in ruminants.</title>
        <authorList>
            <person name="Fan B."/>
            <person name="Li N."/>
            <person name="Wu C."/>
        </authorList>
    </citation>
    <scope>NUCLEOTIDE SEQUENCE [GENOMIC DNA]</scope>
</reference>
<reference key="2">
    <citation type="submission" date="2006-06" db="EMBL/GenBank/DDBJ databases">
        <title>Cloning and characterization of buffalo alpha-lactalbumin gene.</title>
        <authorList>
            <person name="Bhattacharya T.K."/>
            <person name="Kumar P."/>
            <person name="Sharma A."/>
        </authorList>
    </citation>
    <scope>NUCLEOTIDE SEQUENCE [MRNA]</scope>
    <scope>VARIANTS SER-12 AND ARG-32</scope>
    <source>
        <tissue>Mammary gland</tissue>
    </source>
</reference>
<reference key="3">
    <citation type="journal article" date="2005" name="DNA Seq.">
        <title>Genetic polymorphism of alpha-lactalbumin gene in riverine buffalo.</title>
        <authorList>
            <person name="Dayal S."/>
            <person name="Bhattacharya T.K."/>
            <person name="Vohra V."/>
            <person name="Kumar P."/>
            <person name="Sharma A."/>
        </authorList>
    </citation>
    <scope>NUCLEOTIDE SEQUENCE [GENOMIC DNA] OF 1-97 (ALLELES A; B; C; D AND E)</scope>
    <scope>VARIANTS SER-12; ARG-32; ALA-35; CYS-39; ASP-68; MET-85; LYS-85; LYS-93 AND GLY-96</scope>
    <source>
        <strain>Bhadawari</strain>
        <strain>Mehsana</strain>
        <strain>Murrah</strain>
        <strain>Surti</strain>
        <tissue>Blood</tissue>
    </source>
</reference>
<reference key="4">
    <citation type="submission" date="2007-01" db="EMBL/GenBank/DDBJ databases">
        <title>A new variant of alpha-lactalbumin gene in water buffalo.</title>
        <authorList>
            <person name="Nautiyal B."/>
            <person name="Saxena P."/>
            <person name="Singh K.B."/>
            <person name="Sharma D."/>
            <person name="Mohapatra J.K."/>
            <person name="Rasool T.J."/>
        </authorList>
    </citation>
    <scope>NUCLEOTIDE SEQUENCE [GENOMIC DNA] OF 1-44 (ALLELE E)</scope>
    <scope>VARIANT SER-43</scope>
    <source>
        <tissue>Blood</tissue>
    </source>
</reference>
<reference key="5">
    <citation type="submission" date="2010-10" db="UniProtKB">
        <title>Antibacterial activity analysis of buffalo milk whey protein.</title>
        <authorList>
            <person name="Meignanalakshmi S."/>
        </authorList>
    </citation>
    <scope>PROTEIN SEQUENCE OF 19-142</scope>
    <scope>MASS SPECTROMETRY</scope>
</reference>
<name>LALBA_BUBBU</name>
<protein>
    <recommendedName>
        <fullName>Alpha-lactalbumin</fullName>
    </recommendedName>
    <alternativeName>
        <fullName>Lactose synthase B protein</fullName>
    </alternativeName>
</protein>
<gene>
    <name type="primary">LALBA</name>
</gene>
<dbReference type="EMBL" id="AF194373">
    <property type="protein sequence ID" value="AAF06794.1"/>
    <property type="molecule type" value="Genomic_DNA"/>
</dbReference>
<dbReference type="EMBL" id="DQ785796">
    <property type="protein sequence ID" value="ABG78269.1"/>
    <property type="molecule type" value="mRNA"/>
</dbReference>
<dbReference type="EMBL" id="AH014129">
    <property type="protein sequence ID" value="AAU13909.1"/>
    <property type="molecule type" value="Genomic_DNA"/>
</dbReference>
<dbReference type="EMBL" id="AH014130">
    <property type="protein sequence ID" value="AAU13910.1"/>
    <property type="molecule type" value="Genomic_DNA"/>
</dbReference>
<dbReference type="EMBL" id="AH014131">
    <property type="protein sequence ID" value="AAU13911.1"/>
    <property type="molecule type" value="Genomic_DNA"/>
</dbReference>
<dbReference type="EMBL" id="AH014132">
    <property type="protein sequence ID" value="AAU13912.1"/>
    <property type="molecule type" value="Genomic_DNA"/>
</dbReference>
<dbReference type="EMBL" id="AY726617">
    <property type="protein sequence ID" value="AAU13913.1"/>
    <property type="molecule type" value="Genomic_DNA"/>
</dbReference>
<dbReference type="EMBL" id="EF408824">
    <property type="protein sequence ID" value="ABN54437.1"/>
    <property type="molecule type" value="Genomic_DNA"/>
</dbReference>
<dbReference type="PIR" id="S74175">
    <property type="entry name" value="S74175"/>
</dbReference>
<dbReference type="RefSeq" id="NP_001277865.1">
    <property type="nucleotide sequence ID" value="NM_001290936.1"/>
</dbReference>
<dbReference type="BMRB" id="Q9TSN6"/>
<dbReference type="SMR" id="Q9TSN6"/>
<dbReference type="CAZy" id="GH22">
    <property type="family name" value="Glycoside Hydrolase Family 22"/>
</dbReference>
<dbReference type="GlyCosmos" id="Q9TSN6">
    <property type="glycosylation" value="2 sites, No reported glycans"/>
</dbReference>
<dbReference type="GeneID" id="102410146"/>
<dbReference type="KEGG" id="bbub:102410146"/>
<dbReference type="CTD" id="3906"/>
<dbReference type="OrthoDB" id="17373at2759"/>
<dbReference type="GO" id="GO:0005576">
    <property type="term" value="C:extracellular region"/>
    <property type="evidence" value="ECO:0007669"/>
    <property type="project" value="UniProtKB-SubCell"/>
</dbReference>
<dbReference type="GO" id="GO:0005509">
    <property type="term" value="F:calcium ion binding"/>
    <property type="evidence" value="ECO:0007669"/>
    <property type="project" value="InterPro"/>
</dbReference>
<dbReference type="GO" id="GO:0004461">
    <property type="term" value="F:lactose synthase activity"/>
    <property type="evidence" value="ECO:0007669"/>
    <property type="project" value="InterPro"/>
</dbReference>
<dbReference type="GO" id="GO:0003796">
    <property type="term" value="F:lysozyme activity"/>
    <property type="evidence" value="ECO:0007669"/>
    <property type="project" value="TreeGrafter"/>
</dbReference>
<dbReference type="GO" id="GO:0050829">
    <property type="term" value="P:defense response to Gram-negative bacterium"/>
    <property type="evidence" value="ECO:0007669"/>
    <property type="project" value="TreeGrafter"/>
</dbReference>
<dbReference type="GO" id="GO:0050830">
    <property type="term" value="P:defense response to Gram-positive bacterium"/>
    <property type="evidence" value="ECO:0007669"/>
    <property type="project" value="TreeGrafter"/>
</dbReference>
<dbReference type="GO" id="GO:0005989">
    <property type="term" value="P:lactose biosynthetic process"/>
    <property type="evidence" value="ECO:0007669"/>
    <property type="project" value="UniProtKB-KW"/>
</dbReference>
<dbReference type="CDD" id="cd16898">
    <property type="entry name" value="LYZ_LA"/>
    <property type="match status" value="1"/>
</dbReference>
<dbReference type="FunFam" id="1.10.530.10:FF:000014">
    <property type="entry name" value="Alpha-lactalbumin"/>
    <property type="match status" value="1"/>
</dbReference>
<dbReference type="Gene3D" id="1.10.530.10">
    <property type="match status" value="1"/>
</dbReference>
<dbReference type="InterPro" id="IPR001916">
    <property type="entry name" value="Glyco_hydro_22"/>
</dbReference>
<dbReference type="InterPro" id="IPR019799">
    <property type="entry name" value="Glyco_hydro_22_CS"/>
</dbReference>
<dbReference type="InterPro" id="IPR000545">
    <property type="entry name" value="Lactalbumin"/>
</dbReference>
<dbReference type="InterPro" id="IPR023346">
    <property type="entry name" value="Lysozyme-like_dom_sf"/>
</dbReference>
<dbReference type="PANTHER" id="PTHR11407:SF32">
    <property type="entry name" value="ALPHA-LACTALBUMIN"/>
    <property type="match status" value="1"/>
</dbReference>
<dbReference type="PANTHER" id="PTHR11407">
    <property type="entry name" value="LYSOZYME C"/>
    <property type="match status" value="1"/>
</dbReference>
<dbReference type="Pfam" id="PF00062">
    <property type="entry name" value="Lys"/>
    <property type="match status" value="1"/>
</dbReference>
<dbReference type="PRINTS" id="PR00136">
    <property type="entry name" value="LACTALBUMIN"/>
</dbReference>
<dbReference type="PRINTS" id="PR00135">
    <property type="entry name" value="LYZLACT"/>
</dbReference>
<dbReference type="SMART" id="SM00263">
    <property type="entry name" value="LYZ1"/>
    <property type="match status" value="1"/>
</dbReference>
<dbReference type="SUPFAM" id="SSF53955">
    <property type="entry name" value="Lysozyme-like"/>
    <property type="match status" value="1"/>
</dbReference>
<dbReference type="PROSITE" id="PS00128">
    <property type="entry name" value="GLYCOSYL_HYDROL_F22_1"/>
    <property type="match status" value="1"/>
</dbReference>
<dbReference type="PROSITE" id="PS51348">
    <property type="entry name" value="GLYCOSYL_HYDROL_F22_2"/>
    <property type="match status" value="1"/>
</dbReference>
<sequence length="142" mass="16275">MMSFVSLLLVGILFHATQAEQLTKCEVFRELKDLKDYGGVSLPEWVCTAFHTSGYDTQAIVQNNDSTEYGLFQINNKIWCKDDQNPHSSNICNISCDKFLDDDLTDDIMCVKKILDKVGINYWLAHKALCSEKLDQWLCEKL</sequence>
<accession>Q9TSN6</accession>
<accession>A3FMK7</accession>
<accession>Q0PNI0</accession>
<accession>Q645J4</accession>
<accession>Q645J5</accession>
<accession>Q645J6</accession>
<accession>Q645J7</accession>
<accession>Q645J8</accession>
<evidence type="ECO:0000250" key="1">
    <source>
        <dbReference type="UniProtKB" id="P00711"/>
    </source>
</evidence>
<evidence type="ECO:0000255" key="2"/>
<evidence type="ECO:0000255" key="3">
    <source>
        <dbReference type="PROSITE-ProRule" id="PRU00680"/>
    </source>
</evidence>
<evidence type="ECO:0000269" key="4">
    <source>
    </source>
</evidence>
<evidence type="ECO:0000269" key="5">
    <source ref="2"/>
</evidence>
<evidence type="ECO:0000269" key="6">
    <source ref="4"/>
</evidence>
<evidence type="ECO:0000269" key="7">
    <source ref="5"/>
</evidence>
<evidence type="ECO:0000305" key="8"/>
<keyword id="KW-0044">Antibiotic</keyword>
<keyword id="KW-0929">Antimicrobial</keyword>
<keyword id="KW-0106">Calcium</keyword>
<keyword id="KW-0903">Direct protein sequencing</keyword>
<keyword id="KW-1015">Disulfide bond</keyword>
<keyword id="KW-0325">Glycoprotein</keyword>
<keyword id="KW-0422">Lactose biosynthesis</keyword>
<keyword id="KW-0479">Metal-binding</keyword>
<keyword id="KW-0494">Milk protein</keyword>
<keyword id="KW-0964">Secreted</keyword>
<keyword id="KW-0732">Signal</keyword>
<feature type="signal peptide" evidence="7">
    <location>
        <begin position="1"/>
        <end position="18"/>
    </location>
</feature>
<feature type="chain" id="PRO_0000018440" description="Alpha-lactalbumin">
    <location>
        <begin position="19"/>
        <end position="142"/>
    </location>
</feature>
<feature type="domain" description="C-type lysozyme" evidence="3">
    <location>
        <begin position="20"/>
        <end position="142"/>
    </location>
</feature>
<feature type="binding site" evidence="1">
    <location>
        <position position="98"/>
    </location>
    <ligand>
        <name>Ca(2+)</name>
        <dbReference type="ChEBI" id="CHEBI:29108"/>
    </ligand>
</feature>
<feature type="binding site" evidence="1">
    <location>
        <position position="101"/>
    </location>
    <ligand>
        <name>Ca(2+)</name>
        <dbReference type="ChEBI" id="CHEBI:29108"/>
    </ligand>
</feature>
<feature type="binding site" evidence="1">
    <location>
        <position position="103"/>
    </location>
    <ligand>
        <name>Ca(2+)</name>
        <dbReference type="ChEBI" id="CHEBI:29108"/>
    </ligand>
</feature>
<feature type="binding site" evidence="1">
    <location>
        <position position="106"/>
    </location>
    <ligand>
        <name>Ca(2+)</name>
        <dbReference type="ChEBI" id="CHEBI:29108"/>
    </ligand>
</feature>
<feature type="binding site" evidence="1">
    <location>
        <position position="107"/>
    </location>
    <ligand>
        <name>Ca(2+)</name>
        <dbReference type="ChEBI" id="CHEBI:29108"/>
    </ligand>
</feature>
<feature type="glycosylation site" description="N-linked (GlcNAc...) asparagine" evidence="2">
    <location>
        <position position="64"/>
    </location>
</feature>
<feature type="glycosylation site" description="N-linked (GlcNAc...) asparagine" evidence="2">
    <location>
        <position position="93"/>
    </location>
</feature>
<feature type="disulfide bond" evidence="3">
    <location>
        <begin position="25"/>
        <end position="139"/>
    </location>
</feature>
<feature type="disulfide bond" evidence="3">
    <location>
        <begin position="47"/>
        <end position="130"/>
    </location>
</feature>
<feature type="disulfide bond" evidence="3">
    <location>
        <begin position="80"/>
        <end position="96"/>
    </location>
</feature>
<feature type="disulfide bond" evidence="3">
    <location>
        <begin position="92"/>
        <end position="110"/>
    </location>
</feature>
<feature type="sequence variant" description="In allele D." evidence="4 5">
    <original>I</original>
    <variation>S</variation>
    <location>
        <position position="12"/>
    </location>
</feature>
<feature type="sequence variant" description="In allele B and allele D." evidence="4 5">
    <original>K</original>
    <variation>R</variation>
    <location>
        <position position="32"/>
    </location>
</feature>
<feature type="sequence variant" description="In allele B." evidence="4">
    <original>K</original>
    <variation>A</variation>
    <location>
        <position position="35"/>
    </location>
</feature>
<feature type="sequence variant" description="In allele C." evidence="4">
    <original>G</original>
    <variation>C</variation>
    <location>
        <position position="39"/>
    </location>
</feature>
<feature type="sequence variant" description="In allele E." evidence="6">
    <original>P</original>
    <variation>S</variation>
    <location>
        <position position="43"/>
    </location>
</feature>
<feature type="sequence variant" description="In allele C." evidence="4">
    <original>E</original>
    <variation>D</variation>
    <location>
        <position position="68"/>
    </location>
</feature>
<feature type="sequence variant" description="In allele E." evidence="4">
    <original>N</original>
    <variation>K</variation>
    <location>
        <position position="85"/>
    </location>
</feature>
<feature type="sequence variant" description="In allele C." evidence="4">
    <original>N</original>
    <variation>M</variation>
    <location>
        <position position="85"/>
    </location>
</feature>
<feature type="sequence variant" description="In allele C." evidence="4">
    <original>N</original>
    <variation>K</variation>
    <location>
        <position position="93"/>
    </location>
</feature>
<feature type="sequence variant" description="In allele C, allele D and allele E." evidence="4">
    <original>C</original>
    <variation>G</variation>
    <location>
        <position position="96"/>
    </location>
</feature>
<feature type="sequence conflict" description="In Ref. 5; AA sequence." evidence="8" ref="5">
    <original>A</original>
    <variation>M</variation>
    <location>
        <position position="19"/>
    </location>
</feature>
<feature type="sequence conflict" description="In Ref. 5; AA sequence." evidence="8" ref="5">
    <original>D</original>
    <variation>K</variation>
    <location>
        <position position="36"/>
    </location>
</feature>
<feature type="sequence conflict" description="In Ref. 1; AAF06794 and 5; AA sequence." evidence="8" ref="1 5">
    <original>A</original>
    <variation>T</variation>
    <location>
        <position position="49"/>
    </location>
</feature>
<feature type="sequence conflict" description="In Ref. 5; AA sequence." evidence="8" ref="5">
    <original>I</original>
    <variation>T</variation>
    <location>
        <position position="60"/>
    </location>
</feature>
<feature type="sequence conflict" description="In Ref. 5; AA sequence." evidence="8" ref="5">
    <original>D</original>
    <variation>T</variation>
    <location>
        <position position="65"/>
    </location>
</feature>
<feature type="sequence conflict" description="In Ref. 5; AA sequence." evidence="8" ref="5">
    <original>Y</original>
    <variation>V</variation>
    <location>
        <position position="69"/>
    </location>
</feature>
<feature type="sequence conflict" description="In Ref. 5; AA sequence." evidence="8" ref="5">
    <original>M</original>
    <variation>V</variation>
    <location>
        <position position="109"/>
    </location>
</feature>
<comment type="function">
    <text>Regulatory subunit of lactose synthase, changes the substrate specificity of galactosyltransferase in the mammary gland making glucose a good acceptor substrate for this enzyme. This enables LS to synthesize lactose, the major carbohydrate component of milk. In other tissues, galactosyltransferase transfers galactose onto the N-acetylglucosamine of the oligosaccharide chains in glycoproteins.</text>
</comment>
<comment type="subunit">
    <text>Lactose synthase (LS) is a heterodimer of a catalytic component, beta1,4-galactosyltransferase (beta4Gal-T1) and a regulatory component, alpha-lactalbumin (LA).</text>
</comment>
<comment type="subcellular location">
    <subcellularLocation>
        <location>Secreted</location>
    </subcellularLocation>
</comment>
<comment type="tissue specificity">
    <text>Mammary gland specific. Secreted in milk.</text>
</comment>
<comment type="mass spectrometry" mass="14227.0" method="MALDI" evidence="7"/>
<comment type="miscellaneous">
    <text>In vitro digestion with trypsin produces a peptide comprising residues Ile-78 to Lys-98 which has antibacterial activity. It is active against Gram-negative bacterium E.coli (MIC=150 ug/ml) and against Gram-positive bacterium S.aureus (MIC=250 ug/ml).</text>
</comment>
<comment type="similarity">
    <text evidence="3">Belongs to the glycosyl hydrolase 22 family.</text>
</comment>